<keyword id="KW-0227">DNA damage</keyword>
<keyword id="KW-0234">DNA repair</keyword>
<keyword id="KW-0235">DNA replication</keyword>
<keyword id="KW-0436">Ligase</keyword>
<keyword id="KW-0460">Magnesium</keyword>
<keyword id="KW-0464">Manganese</keyword>
<keyword id="KW-0479">Metal-binding</keyword>
<keyword id="KW-0520">NAD</keyword>
<keyword id="KW-0862">Zinc</keyword>
<reference key="1">
    <citation type="journal article" date="2008" name="Genome Res.">
        <title>Comparative genome analysis of Salmonella enteritidis PT4 and Salmonella gallinarum 287/91 provides insights into evolutionary and host adaptation pathways.</title>
        <authorList>
            <person name="Thomson N.R."/>
            <person name="Clayton D.J."/>
            <person name="Windhorst D."/>
            <person name="Vernikos G."/>
            <person name="Davidson S."/>
            <person name="Churcher C."/>
            <person name="Quail M.A."/>
            <person name="Stevens M."/>
            <person name="Jones M.A."/>
            <person name="Watson M."/>
            <person name="Barron A."/>
            <person name="Layton A."/>
            <person name="Pickard D."/>
            <person name="Kingsley R.A."/>
            <person name="Bignell A."/>
            <person name="Clark L."/>
            <person name="Harris B."/>
            <person name="Ormond D."/>
            <person name="Abdellah Z."/>
            <person name="Brooks K."/>
            <person name="Cherevach I."/>
            <person name="Chillingworth T."/>
            <person name="Woodward J."/>
            <person name="Norberczak H."/>
            <person name="Lord A."/>
            <person name="Arrowsmith C."/>
            <person name="Jagels K."/>
            <person name="Moule S."/>
            <person name="Mungall K."/>
            <person name="Saunders M."/>
            <person name="Whitehead S."/>
            <person name="Chabalgoity J.A."/>
            <person name="Maskell D."/>
            <person name="Humphreys T."/>
            <person name="Roberts M."/>
            <person name="Barrow P.A."/>
            <person name="Dougan G."/>
            <person name="Parkhill J."/>
        </authorList>
    </citation>
    <scope>NUCLEOTIDE SEQUENCE [LARGE SCALE GENOMIC DNA]</scope>
    <source>
        <strain>287/91 / NCTC 13346</strain>
    </source>
</reference>
<dbReference type="EC" id="6.5.1.2" evidence="1"/>
<dbReference type="EMBL" id="AM933173">
    <property type="protein sequence ID" value="CAR38285.1"/>
    <property type="molecule type" value="Genomic_DNA"/>
</dbReference>
<dbReference type="RefSeq" id="WP_000433277.1">
    <property type="nucleotide sequence ID" value="NC_011274.1"/>
</dbReference>
<dbReference type="SMR" id="B5RCP9"/>
<dbReference type="KEGG" id="seg:SG2459"/>
<dbReference type="HOGENOM" id="CLU_007764_2_1_6"/>
<dbReference type="Proteomes" id="UP000008321">
    <property type="component" value="Chromosome"/>
</dbReference>
<dbReference type="GO" id="GO:0005829">
    <property type="term" value="C:cytosol"/>
    <property type="evidence" value="ECO:0007669"/>
    <property type="project" value="TreeGrafter"/>
</dbReference>
<dbReference type="GO" id="GO:0003677">
    <property type="term" value="F:DNA binding"/>
    <property type="evidence" value="ECO:0007669"/>
    <property type="project" value="InterPro"/>
</dbReference>
<dbReference type="GO" id="GO:0003911">
    <property type="term" value="F:DNA ligase (NAD+) activity"/>
    <property type="evidence" value="ECO:0007669"/>
    <property type="project" value="UniProtKB-UniRule"/>
</dbReference>
<dbReference type="GO" id="GO:0046872">
    <property type="term" value="F:metal ion binding"/>
    <property type="evidence" value="ECO:0007669"/>
    <property type="project" value="UniProtKB-KW"/>
</dbReference>
<dbReference type="GO" id="GO:0006281">
    <property type="term" value="P:DNA repair"/>
    <property type="evidence" value="ECO:0007669"/>
    <property type="project" value="UniProtKB-KW"/>
</dbReference>
<dbReference type="GO" id="GO:0006260">
    <property type="term" value="P:DNA replication"/>
    <property type="evidence" value="ECO:0007669"/>
    <property type="project" value="UniProtKB-KW"/>
</dbReference>
<dbReference type="CDD" id="cd17748">
    <property type="entry name" value="BRCT_DNA_ligase_like"/>
    <property type="match status" value="1"/>
</dbReference>
<dbReference type="CDD" id="cd00114">
    <property type="entry name" value="LIGANc"/>
    <property type="match status" value="1"/>
</dbReference>
<dbReference type="FunFam" id="1.10.150.20:FF:000006">
    <property type="entry name" value="DNA ligase"/>
    <property type="match status" value="1"/>
</dbReference>
<dbReference type="FunFam" id="1.10.150.20:FF:000007">
    <property type="entry name" value="DNA ligase"/>
    <property type="match status" value="1"/>
</dbReference>
<dbReference type="FunFam" id="1.10.287.610:FF:000002">
    <property type="entry name" value="DNA ligase"/>
    <property type="match status" value="1"/>
</dbReference>
<dbReference type="FunFam" id="2.40.50.140:FF:000012">
    <property type="entry name" value="DNA ligase"/>
    <property type="match status" value="1"/>
</dbReference>
<dbReference type="FunFam" id="3.30.470.30:FF:000001">
    <property type="entry name" value="DNA ligase"/>
    <property type="match status" value="1"/>
</dbReference>
<dbReference type="FunFam" id="3.40.50.10190:FF:000004">
    <property type="entry name" value="DNA ligase"/>
    <property type="match status" value="1"/>
</dbReference>
<dbReference type="FunFam" id="6.20.10.30:FF:000001">
    <property type="entry name" value="DNA ligase"/>
    <property type="match status" value="1"/>
</dbReference>
<dbReference type="Gene3D" id="6.20.10.30">
    <property type="match status" value="1"/>
</dbReference>
<dbReference type="Gene3D" id="1.10.150.20">
    <property type="entry name" value="5' to 3' exonuclease, C-terminal subdomain"/>
    <property type="match status" value="2"/>
</dbReference>
<dbReference type="Gene3D" id="3.40.50.10190">
    <property type="entry name" value="BRCT domain"/>
    <property type="match status" value="1"/>
</dbReference>
<dbReference type="Gene3D" id="3.30.470.30">
    <property type="entry name" value="DNA ligase/mRNA capping enzyme"/>
    <property type="match status" value="1"/>
</dbReference>
<dbReference type="Gene3D" id="1.10.287.610">
    <property type="entry name" value="Helix hairpin bin"/>
    <property type="match status" value="1"/>
</dbReference>
<dbReference type="Gene3D" id="2.40.50.140">
    <property type="entry name" value="Nucleic acid-binding proteins"/>
    <property type="match status" value="1"/>
</dbReference>
<dbReference type="HAMAP" id="MF_01588">
    <property type="entry name" value="DNA_ligase_A"/>
    <property type="match status" value="1"/>
</dbReference>
<dbReference type="InterPro" id="IPR001357">
    <property type="entry name" value="BRCT_dom"/>
</dbReference>
<dbReference type="InterPro" id="IPR036420">
    <property type="entry name" value="BRCT_dom_sf"/>
</dbReference>
<dbReference type="InterPro" id="IPR041663">
    <property type="entry name" value="DisA/LigA_HHH"/>
</dbReference>
<dbReference type="InterPro" id="IPR001679">
    <property type="entry name" value="DNA_ligase"/>
</dbReference>
<dbReference type="InterPro" id="IPR018239">
    <property type="entry name" value="DNA_ligase_AS"/>
</dbReference>
<dbReference type="InterPro" id="IPR033136">
    <property type="entry name" value="DNA_ligase_CS"/>
</dbReference>
<dbReference type="InterPro" id="IPR013839">
    <property type="entry name" value="DNAligase_adenylation"/>
</dbReference>
<dbReference type="InterPro" id="IPR013840">
    <property type="entry name" value="DNAligase_N"/>
</dbReference>
<dbReference type="InterPro" id="IPR003583">
    <property type="entry name" value="Hlx-hairpin-Hlx_DNA-bd_motif"/>
</dbReference>
<dbReference type="InterPro" id="IPR012340">
    <property type="entry name" value="NA-bd_OB-fold"/>
</dbReference>
<dbReference type="InterPro" id="IPR004150">
    <property type="entry name" value="NAD_DNA_ligase_OB"/>
</dbReference>
<dbReference type="InterPro" id="IPR010994">
    <property type="entry name" value="RuvA_2-like"/>
</dbReference>
<dbReference type="InterPro" id="IPR004149">
    <property type="entry name" value="Znf_DNAligase_C4"/>
</dbReference>
<dbReference type="NCBIfam" id="TIGR00575">
    <property type="entry name" value="dnlj"/>
    <property type="match status" value="1"/>
</dbReference>
<dbReference type="NCBIfam" id="NF005932">
    <property type="entry name" value="PRK07956.1"/>
    <property type="match status" value="1"/>
</dbReference>
<dbReference type="PANTHER" id="PTHR23389">
    <property type="entry name" value="CHROMOSOME TRANSMISSION FIDELITY FACTOR 18"/>
    <property type="match status" value="1"/>
</dbReference>
<dbReference type="PANTHER" id="PTHR23389:SF9">
    <property type="entry name" value="DNA LIGASE"/>
    <property type="match status" value="1"/>
</dbReference>
<dbReference type="Pfam" id="PF00533">
    <property type="entry name" value="BRCT"/>
    <property type="match status" value="1"/>
</dbReference>
<dbReference type="Pfam" id="PF01653">
    <property type="entry name" value="DNA_ligase_aden"/>
    <property type="match status" value="1"/>
</dbReference>
<dbReference type="Pfam" id="PF03120">
    <property type="entry name" value="DNA_ligase_OB"/>
    <property type="match status" value="1"/>
</dbReference>
<dbReference type="Pfam" id="PF03119">
    <property type="entry name" value="DNA_ligase_ZBD"/>
    <property type="match status" value="1"/>
</dbReference>
<dbReference type="Pfam" id="PF12826">
    <property type="entry name" value="HHH_2"/>
    <property type="match status" value="1"/>
</dbReference>
<dbReference type="Pfam" id="PF14520">
    <property type="entry name" value="HHH_5"/>
    <property type="match status" value="1"/>
</dbReference>
<dbReference type="Pfam" id="PF22745">
    <property type="entry name" value="Nlig-Ia"/>
    <property type="match status" value="1"/>
</dbReference>
<dbReference type="PIRSF" id="PIRSF001604">
    <property type="entry name" value="LigA"/>
    <property type="match status" value="1"/>
</dbReference>
<dbReference type="SMART" id="SM00292">
    <property type="entry name" value="BRCT"/>
    <property type="match status" value="1"/>
</dbReference>
<dbReference type="SMART" id="SM00278">
    <property type="entry name" value="HhH1"/>
    <property type="match status" value="4"/>
</dbReference>
<dbReference type="SMART" id="SM00532">
    <property type="entry name" value="LIGANc"/>
    <property type="match status" value="1"/>
</dbReference>
<dbReference type="SUPFAM" id="SSF52113">
    <property type="entry name" value="BRCT domain"/>
    <property type="match status" value="1"/>
</dbReference>
<dbReference type="SUPFAM" id="SSF56091">
    <property type="entry name" value="DNA ligase/mRNA capping enzyme, catalytic domain"/>
    <property type="match status" value="1"/>
</dbReference>
<dbReference type="SUPFAM" id="SSF50249">
    <property type="entry name" value="Nucleic acid-binding proteins"/>
    <property type="match status" value="1"/>
</dbReference>
<dbReference type="SUPFAM" id="SSF47781">
    <property type="entry name" value="RuvA domain 2-like"/>
    <property type="match status" value="1"/>
</dbReference>
<dbReference type="PROSITE" id="PS50172">
    <property type="entry name" value="BRCT"/>
    <property type="match status" value="1"/>
</dbReference>
<dbReference type="PROSITE" id="PS01055">
    <property type="entry name" value="DNA_LIGASE_N1"/>
    <property type="match status" value="1"/>
</dbReference>
<dbReference type="PROSITE" id="PS01056">
    <property type="entry name" value="DNA_LIGASE_N2"/>
    <property type="match status" value="1"/>
</dbReference>
<comment type="function">
    <text evidence="1">DNA ligase that catalyzes the formation of phosphodiester linkages between 5'-phosphoryl and 3'-hydroxyl groups in double-stranded DNA using NAD as a coenzyme and as the energy source for the reaction. It is essential for DNA replication and repair of damaged DNA.</text>
</comment>
<comment type="catalytic activity">
    <reaction evidence="1">
        <text>NAD(+) + (deoxyribonucleotide)n-3'-hydroxyl + 5'-phospho-(deoxyribonucleotide)m = (deoxyribonucleotide)n+m + AMP + beta-nicotinamide D-nucleotide.</text>
        <dbReference type="EC" id="6.5.1.2"/>
    </reaction>
</comment>
<comment type="cofactor">
    <cofactor evidence="1">
        <name>Mg(2+)</name>
        <dbReference type="ChEBI" id="CHEBI:18420"/>
    </cofactor>
    <cofactor evidence="1">
        <name>Mn(2+)</name>
        <dbReference type="ChEBI" id="CHEBI:29035"/>
    </cofactor>
</comment>
<comment type="similarity">
    <text evidence="1">Belongs to the NAD-dependent DNA ligase family. LigA subfamily.</text>
</comment>
<gene>
    <name evidence="1" type="primary">ligA</name>
    <name type="ordered locus">SG2459</name>
</gene>
<organism>
    <name type="scientific">Salmonella gallinarum (strain 287/91 / NCTC 13346)</name>
    <dbReference type="NCBI Taxonomy" id="550538"/>
    <lineage>
        <taxon>Bacteria</taxon>
        <taxon>Pseudomonadati</taxon>
        <taxon>Pseudomonadota</taxon>
        <taxon>Gammaproteobacteria</taxon>
        <taxon>Enterobacterales</taxon>
        <taxon>Enterobacteriaceae</taxon>
        <taxon>Salmonella</taxon>
    </lineage>
</organism>
<protein>
    <recommendedName>
        <fullName evidence="1">DNA ligase</fullName>
        <ecNumber evidence="1">6.5.1.2</ecNumber>
    </recommendedName>
    <alternativeName>
        <fullName evidence="1">Polydeoxyribonucleotide synthase [NAD(+)]</fullName>
    </alternativeName>
</protein>
<accession>B5RCP9</accession>
<proteinExistence type="inferred from homology"/>
<name>DNLJ_SALG2</name>
<evidence type="ECO:0000255" key="1">
    <source>
        <dbReference type="HAMAP-Rule" id="MF_01588"/>
    </source>
</evidence>
<sequence length="671" mass="73414">MEPIEQQLTELRTTLRHHEYLYHVMDAPEIPDAEYDRLMRELRELEAQRPDLITPDSPTQRVGAAPLTAFNQIRHEVPMLSLDNVFDEESFLAFNKRVQDRLKSTENVIWCCELKLDGLAVSILYENGVLVSAATRGDGTTGEDITSNVRTIRAIPLKLHGDNIPARLEVRGEVFLPQAGFEKINEDARRTGGKVFANPRNAAAGSLRQLDPRITAKRPLTFFCYGVGILEGGELPDTHLGRLLQFKAWGLPVSDRVTLCDSPQAVLDFYRNVEKDRPTLGFDIDGVVIKVNSLALQEQLGFVARAPRWAVAFKFPAQEQMTFVRDVEFQVGRTGAITPVARLEPVQVAGVLVSNATLHNADEIEQLGLRIGDKVVIRRAGDVIPQVVNVVLSERPEETRPIVFPTHCPVCGSDVERVEGEAVTRCTGGLICGAQRKESLKHFVSRRAMDVDGMGDKIIDQLVEREYVHTPADLFRLTAGKLTGLDRMGPKSAQNVVNALEKAKATTFARFLYALGIREVGEATAAGLAAYFGTLEALQTATIDELQKVPDVGIVVATHVFNFFAEESNRDVIGQLLAEGVHWPAPVVINVQEIDSPFAGKTVVLTGSLSQMSRDDAKARLAALGAKVAGSVSKKTDLVIAGEAAGSKLAKAQELGITVIDEAEMIRLLGA</sequence>
<feature type="chain" id="PRO_0000380463" description="DNA ligase">
    <location>
        <begin position="1"/>
        <end position="671"/>
    </location>
</feature>
<feature type="domain" description="BRCT" evidence="1">
    <location>
        <begin position="593"/>
        <end position="671"/>
    </location>
</feature>
<feature type="active site" description="N6-AMP-lysine intermediate" evidence="1">
    <location>
        <position position="115"/>
    </location>
</feature>
<feature type="binding site" evidence="1">
    <location>
        <begin position="32"/>
        <end position="36"/>
    </location>
    <ligand>
        <name>NAD(+)</name>
        <dbReference type="ChEBI" id="CHEBI:57540"/>
    </ligand>
</feature>
<feature type="binding site" evidence="1">
    <location>
        <begin position="81"/>
        <end position="82"/>
    </location>
    <ligand>
        <name>NAD(+)</name>
        <dbReference type="ChEBI" id="CHEBI:57540"/>
    </ligand>
</feature>
<feature type="binding site" evidence="1">
    <location>
        <position position="113"/>
    </location>
    <ligand>
        <name>NAD(+)</name>
        <dbReference type="ChEBI" id="CHEBI:57540"/>
    </ligand>
</feature>
<feature type="binding site" evidence="1">
    <location>
        <position position="136"/>
    </location>
    <ligand>
        <name>NAD(+)</name>
        <dbReference type="ChEBI" id="CHEBI:57540"/>
    </ligand>
</feature>
<feature type="binding site" evidence="1">
    <location>
        <position position="173"/>
    </location>
    <ligand>
        <name>NAD(+)</name>
        <dbReference type="ChEBI" id="CHEBI:57540"/>
    </ligand>
</feature>
<feature type="binding site" evidence="1">
    <location>
        <position position="290"/>
    </location>
    <ligand>
        <name>NAD(+)</name>
        <dbReference type="ChEBI" id="CHEBI:57540"/>
    </ligand>
</feature>
<feature type="binding site" evidence="1">
    <location>
        <position position="314"/>
    </location>
    <ligand>
        <name>NAD(+)</name>
        <dbReference type="ChEBI" id="CHEBI:57540"/>
    </ligand>
</feature>
<feature type="binding site" evidence="1">
    <location>
        <position position="408"/>
    </location>
    <ligand>
        <name>Zn(2+)</name>
        <dbReference type="ChEBI" id="CHEBI:29105"/>
    </ligand>
</feature>
<feature type="binding site" evidence="1">
    <location>
        <position position="411"/>
    </location>
    <ligand>
        <name>Zn(2+)</name>
        <dbReference type="ChEBI" id="CHEBI:29105"/>
    </ligand>
</feature>
<feature type="binding site" evidence="1">
    <location>
        <position position="426"/>
    </location>
    <ligand>
        <name>Zn(2+)</name>
        <dbReference type="ChEBI" id="CHEBI:29105"/>
    </ligand>
</feature>
<feature type="binding site" evidence="1">
    <location>
        <position position="432"/>
    </location>
    <ligand>
        <name>Zn(2+)</name>
        <dbReference type="ChEBI" id="CHEBI:29105"/>
    </ligand>
</feature>